<name>SYR_RHOE4</name>
<reference key="1">
    <citation type="submission" date="2005-03" db="EMBL/GenBank/DDBJ databases">
        <title>Comparison of the complete genome sequences of Rhodococcus erythropolis PR4 and Rhodococcus opacus B4.</title>
        <authorList>
            <person name="Takarada H."/>
            <person name="Sekine M."/>
            <person name="Hosoyama A."/>
            <person name="Yamada R."/>
            <person name="Fujisawa T."/>
            <person name="Omata S."/>
            <person name="Shimizu A."/>
            <person name="Tsukatani N."/>
            <person name="Tanikawa S."/>
            <person name="Fujita N."/>
            <person name="Harayama S."/>
        </authorList>
    </citation>
    <scope>NUCLEOTIDE SEQUENCE [LARGE SCALE GENOMIC DNA]</scope>
    <source>
        <strain>PR4 / NBRC 100887</strain>
    </source>
</reference>
<sequence length="550" mass="59130">MTPADLAELLRGTAASVLADRGLDVSVLPETLTVERPRNPEHGDYATNIAMQVAKKVGTNPRELAGWIAEALTAADGIESAEIAGPGFLNIRLDKDAQGAIVVSVLEAGSSYGSGDSLAGKKINLEFVSANPTGPIHLGGTRWAAVGDALGRILSAQGGLVTREYYFNDHGAQIDRFSRSLIAAAKGEPAPEDGYAGAYIADIAASVLKQRPDVMELPADEQQETFRAIGVELMFTHIKQTLHDFGVDFDVYFHENSLFESGAVEKAVESLKGSGNLFHEDGAWWLKSTDYGDDKDRVVIKSDGNAAYIAGDIAYFQNKRARGFDLCIYMLGADHHGYIGRLKAAAAAFGDDPDTVEVLIGQMVNLVKDGTAVKMSKRAGTVITLDDLVEAIGVDASRYVMIRSSVDSSIDIDLDLWTKTSSENPVYYVQYAHARLSAIARNAADLGLSADASNLALLTVEQEGDLIRTIGEYPRVVSSAANLREPHRIARYLEELAGAYHRFYGACRILPQGDEDATDVHRARLALCAATRQVLANGLELLGVTAPEQM</sequence>
<keyword id="KW-0030">Aminoacyl-tRNA synthetase</keyword>
<keyword id="KW-0067">ATP-binding</keyword>
<keyword id="KW-0963">Cytoplasm</keyword>
<keyword id="KW-0436">Ligase</keyword>
<keyword id="KW-0547">Nucleotide-binding</keyword>
<keyword id="KW-0648">Protein biosynthesis</keyword>
<gene>
    <name evidence="1" type="primary">argS</name>
    <name type="ordered locus">RER_39240</name>
</gene>
<evidence type="ECO:0000255" key="1">
    <source>
        <dbReference type="HAMAP-Rule" id="MF_00123"/>
    </source>
</evidence>
<comment type="catalytic activity">
    <reaction evidence="1">
        <text>tRNA(Arg) + L-arginine + ATP = L-arginyl-tRNA(Arg) + AMP + diphosphate</text>
        <dbReference type="Rhea" id="RHEA:20301"/>
        <dbReference type="Rhea" id="RHEA-COMP:9658"/>
        <dbReference type="Rhea" id="RHEA-COMP:9673"/>
        <dbReference type="ChEBI" id="CHEBI:30616"/>
        <dbReference type="ChEBI" id="CHEBI:32682"/>
        <dbReference type="ChEBI" id="CHEBI:33019"/>
        <dbReference type="ChEBI" id="CHEBI:78442"/>
        <dbReference type="ChEBI" id="CHEBI:78513"/>
        <dbReference type="ChEBI" id="CHEBI:456215"/>
        <dbReference type="EC" id="6.1.1.19"/>
    </reaction>
</comment>
<comment type="subunit">
    <text evidence="1">Monomer.</text>
</comment>
<comment type="subcellular location">
    <subcellularLocation>
        <location evidence="1">Cytoplasm</location>
    </subcellularLocation>
</comment>
<comment type="similarity">
    <text evidence="1">Belongs to the class-I aminoacyl-tRNA synthetase family.</text>
</comment>
<organism>
    <name type="scientific">Rhodococcus erythropolis (strain PR4 / NBRC 100887)</name>
    <dbReference type="NCBI Taxonomy" id="234621"/>
    <lineage>
        <taxon>Bacteria</taxon>
        <taxon>Bacillati</taxon>
        <taxon>Actinomycetota</taxon>
        <taxon>Actinomycetes</taxon>
        <taxon>Mycobacteriales</taxon>
        <taxon>Nocardiaceae</taxon>
        <taxon>Rhodococcus</taxon>
        <taxon>Rhodococcus erythropolis group</taxon>
    </lineage>
</organism>
<accession>C1A1Z7</accession>
<dbReference type="EC" id="6.1.1.19" evidence="1"/>
<dbReference type="EMBL" id="AP008957">
    <property type="protein sequence ID" value="BAH34632.1"/>
    <property type="molecule type" value="Genomic_DNA"/>
</dbReference>
<dbReference type="RefSeq" id="WP_020908296.1">
    <property type="nucleotide sequence ID" value="NC_012490.1"/>
</dbReference>
<dbReference type="SMR" id="C1A1Z7"/>
<dbReference type="KEGG" id="rer:RER_39240"/>
<dbReference type="PATRIC" id="fig|234621.6.peg.4457"/>
<dbReference type="eggNOG" id="COG0018">
    <property type="taxonomic scope" value="Bacteria"/>
</dbReference>
<dbReference type="HOGENOM" id="CLU_006406_0_1_11"/>
<dbReference type="Proteomes" id="UP000002204">
    <property type="component" value="Chromosome"/>
</dbReference>
<dbReference type="GO" id="GO:0005737">
    <property type="term" value="C:cytoplasm"/>
    <property type="evidence" value="ECO:0007669"/>
    <property type="project" value="UniProtKB-SubCell"/>
</dbReference>
<dbReference type="GO" id="GO:0004814">
    <property type="term" value="F:arginine-tRNA ligase activity"/>
    <property type="evidence" value="ECO:0007669"/>
    <property type="project" value="UniProtKB-UniRule"/>
</dbReference>
<dbReference type="GO" id="GO:0005524">
    <property type="term" value="F:ATP binding"/>
    <property type="evidence" value="ECO:0007669"/>
    <property type="project" value="UniProtKB-UniRule"/>
</dbReference>
<dbReference type="GO" id="GO:0006420">
    <property type="term" value="P:arginyl-tRNA aminoacylation"/>
    <property type="evidence" value="ECO:0007669"/>
    <property type="project" value="UniProtKB-UniRule"/>
</dbReference>
<dbReference type="CDD" id="cd07956">
    <property type="entry name" value="Anticodon_Ia_Arg"/>
    <property type="match status" value="1"/>
</dbReference>
<dbReference type="CDD" id="cd00671">
    <property type="entry name" value="ArgRS_core"/>
    <property type="match status" value="1"/>
</dbReference>
<dbReference type="FunFam" id="1.10.730.10:FF:000008">
    <property type="entry name" value="Arginine--tRNA ligase"/>
    <property type="match status" value="1"/>
</dbReference>
<dbReference type="FunFam" id="3.30.1360.70:FF:000003">
    <property type="entry name" value="Arginine--tRNA ligase"/>
    <property type="match status" value="1"/>
</dbReference>
<dbReference type="FunFam" id="3.40.50.620:FF:000062">
    <property type="entry name" value="Arginine--tRNA ligase"/>
    <property type="match status" value="1"/>
</dbReference>
<dbReference type="Gene3D" id="3.30.1360.70">
    <property type="entry name" value="Arginyl tRNA synthetase N-terminal domain"/>
    <property type="match status" value="1"/>
</dbReference>
<dbReference type="Gene3D" id="3.40.50.620">
    <property type="entry name" value="HUPs"/>
    <property type="match status" value="1"/>
</dbReference>
<dbReference type="Gene3D" id="1.10.730.10">
    <property type="entry name" value="Isoleucyl-tRNA Synthetase, Domain 1"/>
    <property type="match status" value="1"/>
</dbReference>
<dbReference type="HAMAP" id="MF_00123">
    <property type="entry name" value="Arg_tRNA_synth"/>
    <property type="match status" value="1"/>
</dbReference>
<dbReference type="InterPro" id="IPR001412">
    <property type="entry name" value="aa-tRNA-synth_I_CS"/>
</dbReference>
<dbReference type="InterPro" id="IPR001278">
    <property type="entry name" value="Arg-tRNA-ligase"/>
</dbReference>
<dbReference type="InterPro" id="IPR005148">
    <property type="entry name" value="Arg-tRNA-synth_N"/>
</dbReference>
<dbReference type="InterPro" id="IPR036695">
    <property type="entry name" value="Arg-tRNA-synth_N_sf"/>
</dbReference>
<dbReference type="InterPro" id="IPR035684">
    <property type="entry name" value="ArgRS_core"/>
</dbReference>
<dbReference type="InterPro" id="IPR008909">
    <property type="entry name" value="DALR_anticod-bd"/>
</dbReference>
<dbReference type="InterPro" id="IPR014729">
    <property type="entry name" value="Rossmann-like_a/b/a_fold"/>
</dbReference>
<dbReference type="InterPro" id="IPR009080">
    <property type="entry name" value="tRNAsynth_Ia_anticodon-bd"/>
</dbReference>
<dbReference type="NCBIfam" id="TIGR00456">
    <property type="entry name" value="argS"/>
    <property type="match status" value="1"/>
</dbReference>
<dbReference type="PANTHER" id="PTHR11956:SF5">
    <property type="entry name" value="ARGININE--TRNA LIGASE, CYTOPLASMIC"/>
    <property type="match status" value="1"/>
</dbReference>
<dbReference type="PANTHER" id="PTHR11956">
    <property type="entry name" value="ARGINYL-TRNA SYNTHETASE"/>
    <property type="match status" value="1"/>
</dbReference>
<dbReference type="Pfam" id="PF03485">
    <property type="entry name" value="Arg_tRNA_synt_N"/>
    <property type="match status" value="1"/>
</dbReference>
<dbReference type="Pfam" id="PF05746">
    <property type="entry name" value="DALR_1"/>
    <property type="match status" value="1"/>
</dbReference>
<dbReference type="Pfam" id="PF00750">
    <property type="entry name" value="tRNA-synt_1d"/>
    <property type="match status" value="1"/>
</dbReference>
<dbReference type="PRINTS" id="PR01038">
    <property type="entry name" value="TRNASYNTHARG"/>
</dbReference>
<dbReference type="SMART" id="SM01016">
    <property type="entry name" value="Arg_tRNA_synt_N"/>
    <property type="match status" value="1"/>
</dbReference>
<dbReference type="SMART" id="SM00836">
    <property type="entry name" value="DALR_1"/>
    <property type="match status" value="1"/>
</dbReference>
<dbReference type="SUPFAM" id="SSF47323">
    <property type="entry name" value="Anticodon-binding domain of a subclass of class I aminoacyl-tRNA synthetases"/>
    <property type="match status" value="1"/>
</dbReference>
<dbReference type="SUPFAM" id="SSF55190">
    <property type="entry name" value="Arginyl-tRNA synthetase (ArgRS), N-terminal 'additional' domain"/>
    <property type="match status" value="1"/>
</dbReference>
<dbReference type="SUPFAM" id="SSF52374">
    <property type="entry name" value="Nucleotidylyl transferase"/>
    <property type="match status" value="1"/>
</dbReference>
<dbReference type="PROSITE" id="PS00178">
    <property type="entry name" value="AA_TRNA_LIGASE_I"/>
    <property type="match status" value="1"/>
</dbReference>
<proteinExistence type="inferred from homology"/>
<protein>
    <recommendedName>
        <fullName evidence="1">Arginine--tRNA ligase</fullName>
        <ecNumber evidence="1">6.1.1.19</ecNumber>
    </recommendedName>
    <alternativeName>
        <fullName evidence="1">Arginyl-tRNA synthetase</fullName>
        <shortName evidence="1">ArgRS</shortName>
    </alternativeName>
</protein>
<feature type="chain" id="PRO_1000203103" description="Arginine--tRNA ligase">
    <location>
        <begin position="1"/>
        <end position="550"/>
    </location>
</feature>
<feature type="short sequence motif" description="'HIGH' region">
    <location>
        <begin position="130"/>
        <end position="140"/>
    </location>
</feature>